<feature type="chain" id="PRO_1000080319" description="Glycerol-3-phosphate dehydrogenase [NAD(P)+]">
    <location>
        <begin position="1"/>
        <end position="338"/>
    </location>
</feature>
<feature type="active site" description="Proton acceptor" evidence="1">
    <location>
        <position position="194"/>
    </location>
</feature>
<feature type="binding site" evidence="1">
    <location>
        <position position="14"/>
    </location>
    <ligand>
        <name>NADPH</name>
        <dbReference type="ChEBI" id="CHEBI:57783"/>
    </ligand>
</feature>
<feature type="binding site" evidence="1">
    <location>
        <position position="15"/>
    </location>
    <ligand>
        <name>NADPH</name>
        <dbReference type="ChEBI" id="CHEBI:57783"/>
    </ligand>
</feature>
<feature type="binding site" evidence="1">
    <location>
        <position position="35"/>
    </location>
    <ligand>
        <name>NADPH</name>
        <dbReference type="ChEBI" id="CHEBI:57783"/>
    </ligand>
</feature>
<feature type="binding site" evidence="1">
    <location>
        <position position="109"/>
    </location>
    <ligand>
        <name>NADPH</name>
        <dbReference type="ChEBI" id="CHEBI:57783"/>
    </ligand>
</feature>
<feature type="binding site" evidence="1">
    <location>
        <position position="109"/>
    </location>
    <ligand>
        <name>sn-glycerol 3-phosphate</name>
        <dbReference type="ChEBI" id="CHEBI:57597"/>
    </ligand>
</feature>
<feature type="binding site" evidence="1">
    <location>
        <position position="138"/>
    </location>
    <ligand>
        <name>sn-glycerol 3-phosphate</name>
        <dbReference type="ChEBI" id="CHEBI:57597"/>
    </ligand>
</feature>
<feature type="binding site" evidence="1">
    <location>
        <position position="140"/>
    </location>
    <ligand>
        <name>sn-glycerol 3-phosphate</name>
        <dbReference type="ChEBI" id="CHEBI:57597"/>
    </ligand>
</feature>
<feature type="binding site" evidence="1">
    <location>
        <position position="142"/>
    </location>
    <ligand>
        <name>NADPH</name>
        <dbReference type="ChEBI" id="CHEBI:57783"/>
    </ligand>
</feature>
<feature type="binding site" evidence="1">
    <location>
        <position position="194"/>
    </location>
    <ligand>
        <name>sn-glycerol 3-phosphate</name>
        <dbReference type="ChEBI" id="CHEBI:57597"/>
    </ligand>
</feature>
<feature type="binding site" evidence="1">
    <location>
        <position position="247"/>
    </location>
    <ligand>
        <name>sn-glycerol 3-phosphate</name>
        <dbReference type="ChEBI" id="CHEBI:57597"/>
    </ligand>
</feature>
<feature type="binding site" evidence="1">
    <location>
        <position position="257"/>
    </location>
    <ligand>
        <name>sn-glycerol 3-phosphate</name>
        <dbReference type="ChEBI" id="CHEBI:57597"/>
    </ligand>
</feature>
<feature type="binding site" evidence="1">
    <location>
        <position position="258"/>
    </location>
    <ligand>
        <name>NADPH</name>
        <dbReference type="ChEBI" id="CHEBI:57783"/>
    </ligand>
</feature>
<feature type="binding site" evidence="1">
    <location>
        <position position="258"/>
    </location>
    <ligand>
        <name>sn-glycerol 3-phosphate</name>
        <dbReference type="ChEBI" id="CHEBI:57597"/>
    </ligand>
</feature>
<feature type="binding site" evidence="1">
    <location>
        <position position="259"/>
    </location>
    <ligand>
        <name>sn-glycerol 3-phosphate</name>
        <dbReference type="ChEBI" id="CHEBI:57597"/>
    </ligand>
</feature>
<feature type="binding site" evidence="1">
    <location>
        <position position="282"/>
    </location>
    <ligand>
        <name>NADPH</name>
        <dbReference type="ChEBI" id="CHEBI:57783"/>
    </ligand>
</feature>
<feature type="binding site" evidence="1">
    <location>
        <position position="284"/>
    </location>
    <ligand>
        <name>NADPH</name>
        <dbReference type="ChEBI" id="CHEBI:57783"/>
    </ligand>
</feature>
<evidence type="ECO:0000255" key="1">
    <source>
        <dbReference type="HAMAP-Rule" id="MF_00394"/>
    </source>
</evidence>
<name>GPDA_SHESH</name>
<gene>
    <name evidence="1" type="primary">gpsA</name>
    <name type="ordered locus">Ssed_4467</name>
</gene>
<dbReference type="EC" id="1.1.1.94" evidence="1"/>
<dbReference type="EMBL" id="CP000821">
    <property type="protein sequence ID" value="ABV39069.1"/>
    <property type="molecule type" value="Genomic_DNA"/>
</dbReference>
<dbReference type="RefSeq" id="WP_012144796.1">
    <property type="nucleotide sequence ID" value="NC_009831.1"/>
</dbReference>
<dbReference type="SMR" id="A8G1U6"/>
<dbReference type="STRING" id="425104.Ssed_4467"/>
<dbReference type="KEGG" id="sse:Ssed_4467"/>
<dbReference type="eggNOG" id="COG0240">
    <property type="taxonomic scope" value="Bacteria"/>
</dbReference>
<dbReference type="HOGENOM" id="CLU_033449_0_2_6"/>
<dbReference type="OrthoDB" id="9812273at2"/>
<dbReference type="UniPathway" id="UPA00940"/>
<dbReference type="Proteomes" id="UP000002015">
    <property type="component" value="Chromosome"/>
</dbReference>
<dbReference type="GO" id="GO:0005829">
    <property type="term" value="C:cytosol"/>
    <property type="evidence" value="ECO:0007669"/>
    <property type="project" value="TreeGrafter"/>
</dbReference>
<dbReference type="GO" id="GO:0047952">
    <property type="term" value="F:glycerol-3-phosphate dehydrogenase [NAD(P)+] activity"/>
    <property type="evidence" value="ECO:0007669"/>
    <property type="project" value="UniProtKB-UniRule"/>
</dbReference>
<dbReference type="GO" id="GO:0051287">
    <property type="term" value="F:NAD binding"/>
    <property type="evidence" value="ECO:0007669"/>
    <property type="project" value="InterPro"/>
</dbReference>
<dbReference type="GO" id="GO:0005975">
    <property type="term" value="P:carbohydrate metabolic process"/>
    <property type="evidence" value="ECO:0007669"/>
    <property type="project" value="InterPro"/>
</dbReference>
<dbReference type="GO" id="GO:0046167">
    <property type="term" value="P:glycerol-3-phosphate biosynthetic process"/>
    <property type="evidence" value="ECO:0007669"/>
    <property type="project" value="UniProtKB-UniRule"/>
</dbReference>
<dbReference type="GO" id="GO:0046168">
    <property type="term" value="P:glycerol-3-phosphate catabolic process"/>
    <property type="evidence" value="ECO:0007669"/>
    <property type="project" value="InterPro"/>
</dbReference>
<dbReference type="GO" id="GO:0046474">
    <property type="term" value="P:glycerophospholipid biosynthetic process"/>
    <property type="evidence" value="ECO:0007669"/>
    <property type="project" value="TreeGrafter"/>
</dbReference>
<dbReference type="FunFam" id="1.10.1040.10:FF:000001">
    <property type="entry name" value="Glycerol-3-phosphate dehydrogenase [NAD(P)+]"/>
    <property type="match status" value="1"/>
</dbReference>
<dbReference type="FunFam" id="3.40.50.720:FF:000019">
    <property type="entry name" value="Glycerol-3-phosphate dehydrogenase [NAD(P)+]"/>
    <property type="match status" value="1"/>
</dbReference>
<dbReference type="Gene3D" id="1.10.1040.10">
    <property type="entry name" value="N-(1-d-carboxylethyl)-l-norvaline Dehydrogenase, domain 2"/>
    <property type="match status" value="1"/>
</dbReference>
<dbReference type="Gene3D" id="3.40.50.720">
    <property type="entry name" value="NAD(P)-binding Rossmann-like Domain"/>
    <property type="match status" value="1"/>
</dbReference>
<dbReference type="HAMAP" id="MF_00394">
    <property type="entry name" value="NAD_Glyc3P_dehydrog"/>
    <property type="match status" value="1"/>
</dbReference>
<dbReference type="InterPro" id="IPR008927">
    <property type="entry name" value="6-PGluconate_DH-like_C_sf"/>
</dbReference>
<dbReference type="InterPro" id="IPR013328">
    <property type="entry name" value="6PGD_dom2"/>
</dbReference>
<dbReference type="InterPro" id="IPR006168">
    <property type="entry name" value="G3P_DH_NAD-dep"/>
</dbReference>
<dbReference type="InterPro" id="IPR006109">
    <property type="entry name" value="G3P_DH_NAD-dep_C"/>
</dbReference>
<dbReference type="InterPro" id="IPR011128">
    <property type="entry name" value="G3P_DH_NAD-dep_N"/>
</dbReference>
<dbReference type="InterPro" id="IPR036291">
    <property type="entry name" value="NAD(P)-bd_dom_sf"/>
</dbReference>
<dbReference type="NCBIfam" id="NF000939">
    <property type="entry name" value="PRK00094.1-1"/>
    <property type="match status" value="1"/>
</dbReference>
<dbReference type="NCBIfam" id="NF000940">
    <property type="entry name" value="PRK00094.1-2"/>
    <property type="match status" value="1"/>
</dbReference>
<dbReference type="NCBIfam" id="NF000942">
    <property type="entry name" value="PRK00094.1-4"/>
    <property type="match status" value="1"/>
</dbReference>
<dbReference type="PANTHER" id="PTHR11728">
    <property type="entry name" value="GLYCEROL-3-PHOSPHATE DEHYDROGENASE"/>
    <property type="match status" value="1"/>
</dbReference>
<dbReference type="PANTHER" id="PTHR11728:SF1">
    <property type="entry name" value="GLYCEROL-3-PHOSPHATE DEHYDROGENASE [NAD(+)] 2, CHLOROPLASTIC"/>
    <property type="match status" value="1"/>
</dbReference>
<dbReference type="Pfam" id="PF07479">
    <property type="entry name" value="NAD_Gly3P_dh_C"/>
    <property type="match status" value="1"/>
</dbReference>
<dbReference type="Pfam" id="PF01210">
    <property type="entry name" value="NAD_Gly3P_dh_N"/>
    <property type="match status" value="1"/>
</dbReference>
<dbReference type="PIRSF" id="PIRSF000114">
    <property type="entry name" value="Glycerol-3-P_dh"/>
    <property type="match status" value="1"/>
</dbReference>
<dbReference type="PRINTS" id="PR00077">
    <property type="entry name" value="GPDHDRGNASE"/>
</dbReference>
<dbReference type="SUPFAM" id="SSF48179">
    <property type="entry name" value="6-phosphogluconate dehydrogenase C-terminal domain-like"/>
    <property type="match status" value="1"/>
</dbReference>
<dbReference type="SUPFAM" id="SSF51735">
    <property type="entry name" value="NAD(P)-binding Rossmann-fold domains"/>
    <property type="match status" value="1"/>
</dbReference>
<dbReference type="PROSITE" id="PS00957">
    <property type="entry name" value="NAD_G3PDH"/>
    <property type="match status" value="1"/>
</dbReference>
<keyword id="KW-0963">Cytoplasm</keyword>
<keyword id="KW-0444">Lipid biosynthesis</keyword>
<keyword id="KW-0443">Lipid metabolism</keyword>
<keyword id="KW-0520">NAD</keyword>
<keyword id="KW-0521">NADP</keyword>
<keyword id="KW-0547">Nucleotide-binding</keyword>
<keyword id="KW-0560">Oxidoreductase</keyword>
<keyword id="KW-0594">Phospholipid biosynthesis</keyword>
<keyword id="KW-1208">Phospholipid metabolism</keyword>
<keyword id="KW-1185">Reference proteome</keyword>
<protein>
    <recommendedName>
        <fullName evidence="1">Glycerol-3-phosphate dehydrogenase [NAD(P)+]</fullName>
        <ecNumber evidence="1">1.1.1.94</ecNumber>
    </recommendedName>
    <alternativeName>
        <fullName evidence="1">NAD(P)(+)-dependent glycerol-3-phosphate dehydrogenase</fullName>
    </alternativeName>
    <alternativeName>
        <fullName evidence="1">NAD(P)H-dependent dihydroxyacetone-phosphate reductase</fullName>
    </alternativeName>
</protein>
<organism>
    <name type="scientific">Shewanella sediminis (strain HAW-EB3)</name>
    <dbReference type="NCBI Taxonomy" id="425104"/>
    <lineage>
        <taxon>Bacteria</taxon>
        <taxon>Pseudomonadati</taxon>
        <taxon>Pseudomonadota</taxon>
        <taxon>Gammaproteobacteria</taxon>
        <taxon>Alteromonadales</taxon>
        <taxon>Shewanellaceae</taxon>
        <taxon>Shewanella</taxon>
    </lineage>
</organism>
<proteinExistence type="inferred from homology"/>
<sequence length="338" mass="35912">MKNTADITVLGAGSYGTALAISLASNGHRTLLWGHEPEHIANLKKDKCNNEFLPGIALPDLLIPEADLATALAASNNVLVVVPSHVFGSVLSQAKPLLRDDARIIWATKGLEPETGRLLQEVARDILGEHYPLAVLSGPTFAKELAAGLPTAISIAGTDVNFIKDLVELLHSPKRLRVYENDDFTGLQLGGAVKNVIAISAGMSDGIGFGANARTALITRGLVELTRLGEAIGAQGATFMGMAGLGDLVLTCTDNQSRNRRFGLALGKGLDVETAQQEIGQVVEGYRNTKEVYTLAKRLGVEMPITEQVYKVLYQGGTPHEAAKALLGRDQKSETPDS</sequence>
<reference key="1">
    <citation type="submission" date="2007-08" db="EMBL/GenBank/DDBJ databases">
        <title>Complete sequence of Shewanella sediminis HAW-EB3.</title>
        <authorList>
            <consortium name="US DOE Joint Genome Institute"/>
            <person name="Copeland A."/>
            <person name="Lucas S."/>
            <person name="Lapidus A."/>
            <person name="Barry K."/>
            <person name="Glavina del Rio T."/>
            <person name="Dalin E."/>
            <person name="Tice H."/>
            <person name="Pitluck S."/>
            <person name="Chertkov O."/>
            <person name="Brettin T."/>
            <person name="Bruce D."/>
            <person name="Detter J.C."/>
            <person name="Han C."/>
            <person name="Schmutz J."/>
            <person name="Larimer F."/>
            <person name="Land M."/>
            <person name="Hauser L."/>
            <person name="Kyrpides N."/>
            <person name="Kim E."/>
            <person name="Zhao J.-S."/>
            <person name="Richardson P."/>
        </authorList>
    </citation>
    <scope>NUCLEOTIDE SEQUENCE [LARGE SCALE GENOMIC DNA]</scope>
    <source>
        <strain>HAW-EB3</strain>
    </source>
</reference>
<accession>A8G1U6</accession>
<comment type="function">
    <text evidence="1">Catalyzes the reduction of the glycolytic intermediate dihydroxyacetone phosphate (DHAP) to sn-glycerol 3-phosphate (G3P), the key precursor for phospholipid synthesis.</text>
</comment>
<comment type="catalytic activity">
    <reaction evidence="1">
        <text>sn-glycerol 3-phosphate + NAD(+) = dihydroxyacetone phosphate + NADH + H(+)</text>
        <dbReference type="Rhea" id="RHEA:11092"/>
        <dbReference type="ChEBI" id="CHEBI:15378"/>
        <dbReference type="ChEBI" id="CHEBI:57540"/>
        <dbReference type="ChEBI" id="CHEBI:57597"/>
        <dbReference type="ChEBI" id="CHEBI:57642"/>
        <dbReference type="ChEBI" id="CHEBI:57945"/>
        <dbReference type="EC" id="1.1.1.94"/>
    </reaction>
    <physiologicalReaction direction="right-to-left" evidence="1">
        <dbReference type="Rhea" id="RHEA:11094"/>
    </physiologicalReaction>
</comment>
<comment type="catalytic activity">
    <reaction evidence="1">
        <text>sn-glycerol 3-phosphate + NADP(+) = dihydroxyacetone phosphate + NADPH + H(+)</text>
        <dbReference type="Rhea" id="RHEA:11096"/>
        <dbReference type="ChEBI" id="CHEBI:15378"/>
        <dbReference type="ChEBI" id="CHEBI:57597"/>
        <dbReference type="ChEBI" id="CHEBI:57642"/>
        <dbReference type="ChEBI" id="CHEBI:57783"/>
        <dbReference type="ChEBI" id="CHEBI:58349"/>
        <dbReference type="EC" id="1.1.1.94"/>
    </reaction>
    <physiologicalReaction direction="right-to-left" evidence="1">
        <dbReference type="Rhea" id="RHEA:11098"/>
    </physiologicalReaction>
</comment>
<comment type="pathway">
    <text evidence="1">Membrane lipid metabolism; glycerophospholipid metabolism.</text>
</comment>
<comment type="subcellular location">
    <subcellularLocation>
        <location evidence="1">Cytoplasm</location>
    </subcellularLocation>
</comment>
<comment type="similarity">
    <text evidence="1">Belongs to the NAD-dependent glycerol-3-phosphate dehydrogenase family.</text>
</comment>